<gene>
    <name evidence="1" type="primary">fmt</name>
    <name type="ordered locus">DP0747</name>
</gene>
<dbReference type="EC" id="2.1.2.9" evidence="1"/>
<dbReference type="EMBL" id="CR522870">
    <property type="protein sequence ID" value="CAG35476.1"/>
    <property type="molecule type" value="Genomic_DNA"/>
</dbReference>
<dbReference type="RefSeq" id="WP_011187992.1">
    <property type="nucleotide sequence ID" value="NC_006138.1"/>
</dbReference>
<dbReference type="SMR" id="Q6AQ97"/>
<dbReference type="STRING" id="177439.DP0747"/>
<dbReference type="KEGG" id="dps:DP0747"/>
<dbReference type="eggNOG" id="COG0223">
    <property type="taxonomic scope" value="Bacteria"/>
</dbReference>
<dbReference type="HOGENOM" id="CLU_033347_1_1_7"/>
<dbReference type="OrthoDB" id="9802815at2"/>
<dbReference type="Proteomes" id="UP000000602">
    <property type="component" value="Chromosome"/>
</dbReference>
<dbReference type="GO" id="GO:0005829">
    <property type="term" value="C:cytosol"/>
    <property type="evidence" value="ECO:0007669"/>
    <property type="project" value="TreeGrafter"/>
</dbReference>
<dbReference type="GO" id="GO:0004479">
    <property type="term" value="F:methionyl-tRNA formyltransferase activity"/>
    <property type="evidence" value="ECO:0007669"/>
    <property type="project" value="UniProtKB-UniRule"/>
</dbReference>
<dbReference type="CDD" id="cd08646">
    <property type="entry name" value="FMT_core_Met-tRNA-FMT_N"/>
    <property type="match status" value="1"/>
</dbReference>
<dbReference type="CDD" id="cd08704">
    <property type="entry name" value="Met_tRNA_FMT_C"/>
    <property type="match status" value="1"/>
</dbReference>
<dbReference type="Gene3D" id="3.10.25.10">
    <property type="entry name" value="Formyl transferase, C-terminal domain"/>
    <property type="match status" value="1"/>
</dbReference>
<dbReference type="Gene3D" id="3.40.50.170">
    <property type="entry name" value="Formyl transferase, N-terminal domain"/>
    <property type="match status" value="1"/>
</dbReference>
<dbReference type="HAMAP" id="MF_00182">
    <property type="entry name" value="Formyl_trans"/>
    <property type="match status" value="1"/>
</dbReference>
<dbReference type="InterPro" id="IPR005794">
    <property type="entry name" value="Fmt"/>
</dbReference>
<dbReference type="InterPro" id="IPR005793">
    <property type="entry name" value="Formyl_trans_C"/>
</dbReference>
<dbReference type="InterPro" id="IPR037022">
    <property type="entry name" value="Formyl_trans_C_sf"/>
</dbReference>
<dbReference type="InterPro" id="IPR002376">
    <property type="entry name" value="Formyl_transf_N"/>
</dbReference>
<dbReference type="InterPro" id="IPR036477">
    <property type="entry name" value="Formyl_transf_N_sf"/>
</dbReference>
<dbReference type="InterPro" id="IPR011034">
    <property type="entry name" value="Formyl_transferase-like_C_sf"/>
</dbReference>
<dbReference type="InterPro" id="IPR044135">
    <property type="entry name" value="Met-tRNA-FMT_C"/>
</dbReference>
<dbReference type="InterPro" id="IPR041711">
    <property type="entry name" value="Met-tRNA-FMT_N"/>
</dbReference>
<dbReference type="NCBIfam" id="TIGR00460">
    <property type="entry name" value="fmt"/>
    <property type="match status" value="1"/>
</dbReference>
<dbReference type="PANTHER" id="PTHR11138">
    <property type="entry name" value="METHIONYL-TRNA FORMYLTRANSFERASE"/>
    <property type="match status" value="1"/>
</dbReference>
<dbReference type="PANTHER" id="PTHR11138:SF5">
    <property type="entry name" value="METHIONYL-TRNA FORMYLTRANSFERASE, MITOCHONDRIAL"/>
    <property type="match status" value="1"/>
</dbReference>
<dbReference type="Pfam" id="PF02911">
    <property type="entry name" value="Formyl_trans_C"/>
    <property type="match status" value="1"/>
</dbReference>
<dbReference type="Pfam" id="PF00551">
    <property type="entry name" value="Formyl_trans_N"/>
    <property type="match status" value="1"/>
</dbReference>
<dbReference type="SUPFAM" id="SSF50486">
    <property type="entry name" value="FMT C-terminal domain-like"/>
    <property type="match status" value="1"/>
</dbReference>
<dbReference type="SUPFAM" id="SSF53328">
    <property type="entry name" value="Formyltransferase"/>
    <property type="match status" value="1"/>
</dbReference>
<accession>Q6AQ97</accession>
<organism>
    <name type="scientific">Desulfotalea psychrophila (strain LSv54 / DSM 12343)</name>
    <dbReference type="NCBI Taxonomy" id="177439"/>
    <lineage>
        <taxon>Bacteria</taxon>
        <taxon>Pseudomonadati</taxon>
        <taxon>Thermodesulfobacteriota</taxon>
        <taxon>Desulfobulbia</taxon>
        <taxon>Desulfobulbales</taxon>
        <taxon>Desulfocapsaceae</taxon>
        <taxon>Desulfotalea</taxon>
    </lineage>
</organism>
<reference key="1">
    <citation type="journal article" date="2004" name="Environ. Microbiol.">
        <title>The genome of Desulfotalea psychrophila, a sulfate-reducing bacterium from permanently cold Arctic sediments.</title>
        <authorList>
            <person name="Rabus R."/>
            <person name="Ruepp A."/>
            <person name="Frickey T."/>
            <person name="Rattei T."/>
            <person name="Fartmann B."/>
            <person name="Stark M."/>
            <person name="Bauer M."/>
            <person name="Zibat A."/>
            <person name="Lombardot T."/>
            <person name="Becker I."/>
            <person name="Amann J."/>
            <person name="Gellner K."/>
            <person name="Teeling H."/>
            <person name="Leuschner W.D."/>
            <person name="Gloeckner F.-O."/>
            <person name="Lupas A.N."/>
            <person name="Amann R."/>
            <person name="Klenk H.-P."/>
        </authorList>
    </citation>
    <scope>NUCLEOTIDE SEQUENCE [LARGE SCALE GENOMIC DNA]</scope>
    <source>
        <strain>DSM 12343 / LSv54</strain>
    </source>
</reference>
<proteinExistence type="inferred from homology"/>
<name>FMT_DESPS</name>
<comment type="function">
    <text evidence="1">Attaches a formyl group to the free amino group of methionyl-tRNA(fMet). The formyl group appears to play a dual role in the initiator identity of N-formylmethionyl-tRNA by promoting its recognition by IF2 and preventing the misappropriation of this tRNA by the elongation apparatus.</text>
</comment>
<comment type="catalytic activity">
    <reaction evidence="1">
        <text>L-methionyl-tRNA(fMet) + (6R)-10-formyltetrahydrofolate = N-formyl-L-methionyl-tRNA(fMet) + (6S)-5,6,7,8-tetrahydrofolate + H(+)</text>
        <dbReference type="Rhea" id="RHEA:24380"/>
        <dbReference type="Rhea" id="RHEA-COMP:9952"/>
        <dbReference type="Rhea" id="RHEA-COMP:9953"/>
        <dbReference type="ChEBI" id="CHEBI:15378"/>
        <dbReference type="ChEBI" id="CHEBI:57453"/>
        <dbReference type="ChEBI" id="CHEBI:78530"/>
        <dbReference type="ChEBI" id="CHEBI:78844"/>
        <dbReference type="ChEBI" id="CHEBI:195366"/>
        <dbReference type="EC" id="2.1.2.9"/>
    </reaction>
</comment>
<comment type="similarity">
    <text evidence="1">Belongs to the Fmt family.</text>
</comment>
<protein>
    <recommendedName>
        <fullName evidence="1">Methionyl-tRNA formyltransferase</fullName>
        <ecNumber evidence="1">2.1.2.9</ecNumber>
    </recommendedName>
</protein>
<keyword id="KW-0648">Protein biosynthesis</keyword>
<keyword id="KW-1185">Reference proteome</keyword>
<keyword id="KW-0808">Transferase</keyword>
<sequence length="323" mass="34857">MVSSQIESEEKSLRIIFMGTPDFASSNLRALLAGPDQVVAVVTQPDRPKGRGKKLTSPPVKVIAEEAGLPVLQPTKVRTDEFLEALAAYAPDLIVVTAYGRILPKPILDLAPLGCINVHGSLLPKYRGAAPIQWAVIQGDDEVGVTTMQMDEGMDTGDILLRKIIIPSPDETAGTLFDKLAELGTSALLETIEGLKKGTIRAEAQDHAQATEAPMLSKNDGLIDWSRTATELESLIRGMDPWPSAFCFLEGKRLRLFMPEVSYQKTDAQPGAVLRAGRDGLLIATGKNCLLVKEIQPEGKKRMTVEAFLCGAKIGAETVLKTT</sequence>
<feature type="chain" id="PRO_0000082957" description="Methionyl-tRNA formyltransferase">
    <location>
        <begin position="1"/>
        <end position="323"/>
    </location>
</feature>
<feature type="binding site" evidence="1">
    <location>
        <begin position="121"/>
        <end position="124"/>
    </location>
    <ligand>
        <name>(6S)-5,6,7,8-tetrahydrofolate</name>
        <dbReference type="ChEBI" id="CHEBI:57453"/>
    </ligand>
</feature>
<evidence type="ECO:0000255" key="1">
    <source>
        <dbReference type="HAMAP-Rule" id="MF_00182"/>
    </source>
</evidence>